<sequence>MRDLLKIHKLEQKEQDFDAIRVGLASPEKIRSWSYGEVKKPETINYRTFRPEREGLFCAKIFGPMKDFECLCSKYKRMKFRNVVCEKCGVEVTHSKVRRERMGHIELAAPVAHIWYLKSLPSRLGLLMDMTLKDIERVLYFEAFLVTDPGSTSLVHKQLLTEEMYFDALDEYGDDEFEAKMGAEAIQDVLSDMKLEVEAANLRENSLNTKSQTKLKKYNKRLKLVNSLIQSGNKPEWMVLKVLPVLPPDLRPLVPLDGGRFATSDLNDLYRRVINRNNRLARLLELDAPEIIVRNEKRMLQEAVDSLIDNGRRGRSVMGNNRRPLKSISDMIKGKQGRFRQNLLGKRVDYSGRSVIVCGPYLKLHQCGLPKKMALELFKPFIYNRLQVKGLASTIKVAKKMVESESPEVWDVLERVVHQHPVLLNRAPTLHRLGIQAFEPLLIEGKAIQLHPLVCGAFNADFDGDQMAVHVPLSEEAQLEARTLMLASNNVLHLASGEPIIVPSQDVILGLYYMTREMINQKGEGLIFANATEALNAYESGNVTLHAKVKLRIQDYQKIDGKFESSTKRIVDTTVGRAIFSRILPNGLSFDLINEAISKKVVSDLIHVCYRTQELKQTVVFADQMMYMGFQYSTKSGISFCSNDMIIPDSKAKMIEQAKTQVKDIQEQFSKGVVTDGERYNKVIDIWSRTSEKVAKAMMDEIGFEDFIDADGKTQKLASFNSVYMMADSGARGSSAQMRQLSGMRGLMAKPDGSIIETPITSNFREGLNNMQYFISTHGARKGLADTALKTANSGYLTRRLVDVGQDLVITEDDCGTDNGLIMKAVIDGGNIVQTLGVVTLGRVTAEDILMPDSTEVFLEKGHLVSLDDSDKINELGIESIKVRSAITCDTRYGVCSSCYGNDMARGHKIGVGEAIGVIAAQSIGEPGTQLTMRTFHIGGAASASTTISSVNVNTDGVAHFENLKSITNENNNLVVISRSSEVTIRNNKGQEVERYKIPYGAIVHVQEGGKVKAKDKIVDWDPHTHPIISEQAGRVIFVDFVEGVTVNKNTDPLTGLTFFEMIDEAERSTAAKGLKPLIKMVEESDSEVVLSTHYLPSTVKINLDDNQVIVAGEVLAKIPKDLSKTSDITGGLPRVADLFEARKAKDHSILVEATGVISFGSSTKSKDRLIITNSEGEAIEMMIHKWRQINVFDGETIEKGDVISDGPSNPHDILRLLGVEALANYVVREVQNVYRLQGVNISDKHIEVIVKQMLRKVEVLDAGDSSFVNGETTEYVRVIETNKQLEVQGKELIIYQRLLMGITKASLATESFISAASFQETTRVLTEASTTGRVDTLQGLKENVIVGRLIPAGTGFKHHQKRRAQYVASITQTIDAQQALADQLNEAEEQAQEG</sequence>
<evidence type="ECO:0000255" key="1">
    <source>
        <dbReference type="HAMAP-Rule" id="MF_01322"/>
    </source>
</evidence>
<keyword id="KW-0240">DNA-directed RNA polymerase</keyword>
<keyword id="KW-0460">Magnesium</keyword>
<keyword id="KW-0479">Metal-binding</keyword>
<keyword id="KW-0548">Nucleotidyltransferase</keyword>
<keyword id="KW-0804">Transcription</keyword>
<keyword id="KW-0808">Transferase</keyword>
<keyword id="KW-0862">Zinc</keyword>
<reference key="1">
    <citation type="journal article" date="2007" name="Science">
        <title>The Calyptogena magnifica chemoautotrophic symbiont genome.</title>
        <authorList>
            <person name="Newton I.L.G."/>
            <person name="Woyke T."/>
            <person name="Auchtung T.A."/>
            <person name="Dilly G.F."/>
            <person name="Dutton R.J."/>
            <person name="Fisher M.C."/>
            <person name="Fontanez K.M."/>
            <person name="Lau E."/>
            <person name="Stewart F.J."/>
            <person name="Richardson P.M."/>
            <person name="Barry K.W."/>
            <person name="Saunders E."/>
            <person name="Detter J.C."/>
            <person name="Wu D."/>
            <person name="Eisen J.A."/>
            <person name="Cavanaugh C.M."/>
        </authorList>
    </citation>
    <scope>NUCLEOTIDE SEQUENCE [LARGE SCALE GENOMIC DNA]</scope>
</reference>
<dbReference type="EC" id="2.7.7.6" evidence="1"/>
<dbReference type="EMBL" id="CP000488">
    <property type="protein sequence ID" value="ABL02531.1"/>
    <property type="molecule type" value="Genomic_DNA"/>
</dbReference>
<dbReference type="RefSeq" id="WP_011738156.1">
    <property type="nucleotide sequence ID" value="NC_008610.1"/>
</dbReference>
<dbReference type="SMR" id="A1AX74"/>
<dbReference type="STRING" id="413404.Rmag_0810"/>
<dbReference type="KEGG" id="rma:Rmag_0810"/>
<dbReference type="eggNOG" id="COG0086">
    <property type="taxonomic scope" value="Bacteria"/>
</dbReference>
<dbReference type="HOGENOM" id="CLU_000524_3_1_6"/>
<dbReference type="OrthoDB" id="9815296at2"/>
<dbReference type="Proteomes" id="UP000002587">
    <property type="component" value="Chromosome"/>
</dbReference>
<dbReference type="GO" id="GO:0000428">
    <property type="term" value="C:DNA-directed RNA polymerase complex"/>
    <property type="evidence" value="ECO:0007669"/>
    <property type="project" value="UniProtKB-KW"/>
</dbReference>
<dbReference type="GO" id="GO:0003677">
    <property type="term" value="F:DNA binding"/>
    <property type="evidence" value="ECO:0007669"/>
    <property type="project" value="UniProtKB-UniRule"/>
</dbReference>
<dbReference type="GO" id="GO:0003899">
    <property type="term" value="F:DNA-directed RNA polymerase activity"/>
    <property type="evidence" value="ECO:0007669"/>
    <property type="project" value="UniProtKB-UniRule"/>
</dbReference>
<dbReference type="GO" id="GO:0000287">
    <property type="term" value="F:magnesium ion binding"/>
    <property type="evidence" value="ECO:0007669"/>
    <property type="project" value="UniProtKB-UniRule"/>
</dbReference>
<dbReference type="GO" id="GO:0008270">
    <property type="term" value="F:zinc ion binding"/>
    <property type="evidence" value="ECO:0007669"/>
    <property type="project" value="UniProtKB-UniRule"/>
</dbReference>
<dbReference type="GO" id="GO:0006351">
    <property type="term" value="P:DNA-templated transcription"/>
    <property type="evidence" value="ECO:0007669"/>
    <property type="project" value="UniProtKB-UniRule"/>
</dbReference>
<dbReference type="CDD" id="cd02655">
    <property type="entry name" value="RNAP_beta'_C"/>
    <property type="match status" value="1"/>
</dbReference>
<dbReference type="CDD" id="cd01609">
    <property type="entry name" value="RNAP_beta'_N"/>
    <property type="match status" value="1"/>
</dbReference>
<dbReference type="FunFam" id="1.10.132.30:FF:000003">
    <property type="entry name" value="DNA-directed RNA polymerase subunit beta"/>
    <property type="match status" value="1"/>
</dbReference>
<dbReference type="FunFam" id="1.10.150.390:FF:000002">
    <property type="entry name" value="DNA-directed RNA polymerase subunit beta"/>
    <property type="match status" value="1"/>
</dbReference>
<dbReference type="Gene3D" id="1.10.132.30">
    <property type="match status" value="1"/>
</dbReference>
<dbReference type="Gene3D" id="1.10.150.390">
    <property type="match status" value="1"/>
</dbReference>
<dbReference type="Gene3D" id="1.10.1790.20">
    <property type="match status" value="1"/>
</dbReference>
<dbReference type="Gene3D" id="1.10.40.90">
    <property type="match status" value="1"/>
</dbReference>
<dbReference type="Gene3D" id="2.40.40.20">
    <property type="match status" value="1"/>
</dbReference>
<dbReference type="Gene3D" id="2.40.50.100">
    <property type="match status" value="3"/>
</dbReference>
<dbReference type="Gene3D" id="4.10.860.120">
    <property type="entry name" value="RNA polymerase II, clamp domain"/>
    <property type="match status" value="1"/>
</dbReference>
<dbReference type="Gene3D" id="1.10.274.100">
    <property type="entry name" value="RNA polymerase Rpb1, domain 3"/>
    <property type="match status" value="1"/>
</dbReference>
<dbReference type="HAMAP" id="MF_01322">
    <property type="entry name" value="RNApol_bact_RpoC"/>
    <property type="match status" value="1"/>
</dbReference>
<dbReference type="InterPro" id="IPR045867">
    <property type="entry name" value="DNA-dir_RpoC_beta_prime"/>
</dbReference>
<dbReference type="InterPro" id="IPR012754">
    <property type="entry name" value="DNA-dir_RpoC_beta_prime_bact"/>
</dbReference>
<dbReference type="InterPro" id="IPR000722">
    <property type="entry name" value="RNA_pol_asu"/>
</dbReference>
<dbReference type="InterPro" id="IPR006592">
    <property type="entry name" value="RNA_pol_N"/>
</dbReference>
<dbReference type="InterPro" id="IPR007080">
    <property type="entry name" value="RNA_pol_Rpb1_1"/>
</dbReference>
<dbReference type="InterPro" id="IPR007066">
    <property type="entry name" value="RNA_pol_Rpb1_3"/>
</dbReference>
<dbReference type="InterPro" id="IPR042102">
    <property type="entry name" value="RNA_pol_Rpb1_3_sf"/>
</dbReference>
<dbReference type="InterPro" id="IPR007083">
    <property type="entry name" value="RNA_pol_Rpb1_4"/>
</dbReference>
<dbReference type="InterPro" id="IPR007081">
    <property type="entry name" value="RNA_pol_Rpb1_5"/>
</dbReference>
<dbReference type="InterPro" id="IPR044893">
    <property type="entry name" value="RNA_pol_Rpb1_clamp_domain"/>
</dbReference>
<dbReference type="InterPro" id="IPR038120">
    <property type="entry name" value="Rpb1_funnel_sf"/>
</dbReference>
<dbReference type="NCBIfam" id="TIGR02386">
    <property type="entry name" value="rpoC_TIGR"/>
    <property type="match status" value="1"/>
</dbReference>
<dbReference type="PANTHER" id="PTHR19376">
    <property type="entry name" value="DNA-DIRECTED RNA POLYMERASE"/>
    <property type="match status" value="1"/>
</dbReference>
<dbReference type="PANTHER" id="PTHR19376:SF54">
    <property type="entry name" value="DNA-DIRECTED RNA POLYMERASE SUBUNIT BETA"/>
    <property type="match status" value="1"/>
</dbReference>
<dbReference type="Pfam" id="PF04997">
    <property type="entry name" value="RNA_pol_Rpb1_1"/>
    <property type="match status" value="1"/>
</dbReference>
<dbReference type="Pfam" id="PF00623">
    <property type="entry name" value="RNA_pol_Rpb1_2"/>
    <property type="match status" value="2"/>
</dbReference>
<dbReference type="Pfam" id="PF04983">
    <property type="entry name" value="RNA_pol_Rpb1_3"/>
    <property type="match status" value="1"/>
</dbReference>
<dbReference type="Pfam" id="PF05000">
    <property type="entry name" value="RNA_pol_Rpb1_4"/>
    <property type="match status" value="1"/>
</dbReference>
<dbReference type="Pfam" id="PF04998">
    <property type="entry name" value="RNA_pol_Rpb1_5"/>
    <property type="match status" value="1"/>
</dbReference>
<dbReference type="SMART" id="SM00663">
    <property type="entry name" value="RPOLA_N"/>
    <property type="match status" value="1"/>
</dbReference>
<dbReference type="SUPFAM" id="SSF64484">
    <property type="entry name" value="beta and beta-prime subunits of DNA dependent RNA-polymerase"/>
    <property type="match status" value="1"/>
</dbReference>
<accession>A1AX74</accession>
<name>RPOC_RUTMC</name>
<proteinExistence type="inferred from homology"/>
<comment type="function">
    <text evidence="1">DNA-dependent RNA polymerase catalyzes the transcription of DNA into RNA using the four ribonucleoside triphosphates as substrates.</text>
</comment>
<comment type="catalytic activity">
    <reaction evidence="1">
        <text>RNA(n) + a ribonucleoside 5'-triphosphate = RNA(n+1) + diphosphate</text>
        <dbReference type="Rhea" id="RHEA:21248"/>
        <dbReference type="Rhea" id="RHEA-COMP:14527"/>
        <dbReference type="Rhea" id="RHEA-COMP:17342"/>
        <dbReference type="ChEBI" id="CHEBI:33019"/>
        <dbReference type="ChEBI" id="CHEBI:61557"/>
        <dbReference type="ChEBI" id="CHEBI:140395"/>
        <dbReference type="EC" id="2.7.7.6"/>
    </reaction>
</comment>
<comment type="cofactor">
    <cofactor evidence="1">
        <name>Mg(2+)</name>
        <dbReference type="ChEBI" id="CHEBI:18420"/>
    </cofactor>
    <text evidence="1">Binds 1 Mg(2+) ion per subunit.</text>
</comment>
<comment type="cofactor">
    <cofactor evidence="1">
        <name>Zn(2+)</name>
        <dbReference type="ChEBI" id="CHEBI:29105"/>
    </cofactor>
    <text evidence="1">Binds 2 Zn(2+) ions per subunit.</text>
</comment>
<comment type="subunit">
    <text evidence="1">The RNAP catalytic core consists of 2 alpha, 1 beta, 1 beta' and 1 omega subunit. When a sigma factor is associated with the core the holoenzyme is formed, which can initiate transcription.</text>
</comment>
<comment type="similarity">
    <text evidence="1">Belongs to the RNA polymerase beta' chain family.</text>
</comment>
<gene>
    <name evidence="1" type="primary">rpoC</name>
    <name type="ordered locus">Rmag_0810</name>
</gene>
<protein>
    <recommendedName>
        <fullName evidence="1">DNA-directed RNA polymerase subunit beta'</fullName>
        <shortName evidence="1">RNAP subunit beta'</shortName>
        <ecNumber evidence="1">2.7.7.6</ecNumber>
    </recommendedName>
    <alternativeName>
        <fullName evidence="1">RNA polymerase subunit beta'</fullName>
    </alternativeName>
    <alternativeName>
        <fullName evidence="1">Transcriptase subunit beta'</fullName>
    </alternativeName>
</protein>
<organism>
    <name type="scientific">Ruthia magnifica subsp. Calyptogena magnifica</name>
    <dbReference type="NCBI Taxonomy" id="413404"/>
    <lineage>
        <taxon>Bacteria</taxon>
        <taxon>Pseudomonadati</taxon>
        <taxon>Pseudomonadota</taxon>
        <taxon>Gammaproteobacteria</taxon>
        <taxon>Candidatus Pseudothioglobaceae</taxon>
        <taxon>Candidatus Ruthturnera</taxon>
    </lineage>
</organism>
<feature type="chain" id="PRO_0000353426" description="DNA-directed RNA polymerase subunit beta'">
    <location>
        <begin position="1"/>
        <end position="1395"/>
    </location>
</feature>
<feature type="binding site" evidence="1">
    <location>
        <position position="70"/>
    </location>
    <ligand>
        <name>Zn(2+)</name>
        <dbReference type="ChEBI" id="CHEBI:29105"/>
        <label>1</label>
    </ligand>
</feature>
<feature type="binding site" evidence="1">
    <location>
        <position position="72"/>
    </location>
    <ligand>
        <name>Zn(2+)</name>
        <dbReference type="ChEBI" id="CHEBI:29105"/>
        <label>1</label>
    </ligand>
</feature>
<feature type="binding site" evidence="1">
    <location>
        <position position="85"/>
    </location>
    <ligand>
        <name>Zn(2+)</name>
        <dbReference type="ChEBI" id="CHEBI:29105"/>
        <label>1</label>
    </ligand>
</feature>
<feature type="binding site" evidence="1">
    <location>
        <position position="88"/>
    </location>
    <ligand>
        <name>Zn(2+)</name>
        <dbReference type="ChEBI" id="CHEBI:29105"/>
        <label>1</label>
    </ligand>
</feature>
<feature type="binding site" evidence="1">
    <location>
        <position position="461"/>
    </location>
    <ligand>
        <name>Mg(2+)</name>
        <dbReference type="ChEBI" id="CHEBI:18420"/>
    </ligand>
</feature>
<feature type="binding site" evidence="1">
    <location>
        <position position="463"/>
    </location>
    <ligand>
        <name>Mg(2+)</name>
        <dbReference type="ChEBI" id="CHEBI:18420"/>
    </ligand>
</feature>
<feature type="binding site" evidence="1">
    <location>
        <position position="465"/>
    </location>
    <ligand>
        <name>Mg(2+)</name>
        <dbReference type="ChEBI" id="CHEBI:18420"/>
    </ligand>
</feature>
<feature type="binding site" evidence="1">
    <location>
        <position position="815"/>
    </location>
    <ligand>
        <name>Zn(2+)</name>
        <dbReference type="ChEBI" id="CHEBI:29105"/>
        <label>2</label>
    </ligand>
</feature>
<feature type="binding site" evidence="1">
    <location>
        <position position="889"/>
    </location>
    <ligand>
        <name>Zn(2+)</name>
        <dbReference type="ChEBI" id="CHEBI:29105"/>
        <label>2</label>
    </ligand>
</feature>
<feature type="binding site" evidence="1">
    <location>
        <position position="896"/>
    </location>
    <ligand>
        <name>Zn(2+)</name>
        <dbReference type="ChEBI" id="CHEBI:29105"/>
        <label>2</label>
    </ligand>
</feature>
<feature type="binding site" evidence="1">
    <location>
        <position position="899"/>
    </location>
    <ligand>
        <name>Zn(2+)</name>
        <dbReference type="ChEBI" id="CHEBI:29105"/>
        <label>2</label>
    </ligand>
</feature>